<gene>
    <name type="primary">tig</name>
    <name type="synonym">ropA</name>
    <name type="ordered locus">SPy_1896</name>
    <name type="ordered locus">M5005_Spy1612</name>
</gene>
<sequence>MSTSFENKATNRGVITFTISQDKIKPALDKAFNKIKKDLNAPGFRKGHMPRPVFNQKFGEEVLYEDALNIVLPEAYEAAVTELGLDVVAQPKIDVVSMEKGKEWTLSAEVVTKPEVKLGDYKNLVVEVDASKEVSDEDVDAKIERERQNLAELIIKDGEAAQGDTVVIDFVGSVDGVEFDGGKGDNFSLELGSGQFIPGFEDQLVGAKAGDEVEVNVTFPESYQAEDLAGKAAKFMTTIHEVKTKEVPELDDELAKDIDEDVDTLEDLKVKYRKELEAAQETAYDDAVEGAAIELAVANAEIVDLPEEMIHEEVNRSVNEFMGNMQRQGISPEMYFQLTGTTQEDLHNQYSAEADKRVKTNLVIEAIAKAEGFEATDSEIEQEINDLATEYNMPADQVRSLLSADMLKHDIAMKKAVEVITSTASVK</sequence>
<reference key="1">
    <citation type="journal article" date="2001" name="Proc. Natl. Acad. Sci. U.S.A.">
        <title>Complete genome sequence of an M1 strain of Streptococcus pyogenes.</title>
        <authorList>
            <person name="Ferretti J.J."/>
            <person name="McShan W.M."/>
            <person name="Ajdic D.J."/>
            <person name="Savic D.J."/>
            <person name="Savic G."/>
            <person name="Lyon K."/>
            <person name="Primeaux C."/>
            <person name="Sezate S."/>
            <person name="Suvorov A.N."/>
            <person name="Kenton S."/>
            <person name="Lai H.S."/>
            <person name="Lin S.P."/>
            <person name="Qian Y."/>
            <person name="Jia H.G."/>
            <person name="Najar F.Z."/>
            <person name="Ren Q."/>
            <person name="Zhu H."/>
            <person name="Song L."/>
            <person name="White J."/>
            <person name="Yuan X."/>
            <person name="Clifton S.W."/>
            <person name="Roe B.A."/>
            <person name="McLaughlin R.E."/>
        </authorList>
    </citation>
    <scope>NUCLEOTIDE SEQUENCE [LARGE SCALE GENOMIC DNA]</scope>
    <source>
        <strain>ATCC 700294 / SF370 / Serotype M1</strain>
    </source>
</reference>
<reference key="2">
    <citation type="submission" date="2014-04" db="EMBL/GenBank/DDBJ databases">
        <authorList>
            <person name="Beres S.B."/>
            <person name="Musser J.M."/>
        </authorList>
    </citation>
    <scope>SEQUENCE REVISION TO 361</scope>
</reference>
<reference key="3">
    <citation type="journal article" date="2005" name="J. Infect. Dis.">
        <title>Evolutionary origin and emergence of a highly successful clone of serotype M1 group A Streptococcus involved multiple horizontal gene transfer events.</title>
        <authorList>
            <person name="Sumby P."/>
            <person name="Porcella S.F."/>
            <person name="Madrigal A.G."/>
            <person name="Barbian K.D."/>
            <person name="Virtaneva K."/>
            <person name="Ricklefs S.M."/>
            <person name="Sturdevant D.E."/>
            <person name="Graham M.R."/>
            <person name="Vuopio-Varkila J."/>
            <person name="Hoe N.P."/>
            <person name="Musser J.M."/>
        </authorList>
    </citation>
    <scope>NUCLEOTIDE SEQUENCE [LARGE SCALE GENOMIC DNA]</scope>
    <source>
        <strain>ATCC BAA-947 / MGAS5005 / Serotype M1</strain>
    </source>
</reference>
<comment type="function">
    <text evidence="1">Involved in protein export. Acts as a chaperone by maintaining the newly synthesized protein in an open conformation. Functions as a peptidyl-prolyl cis-trans isomerase (By similarity).</text>
</comment>
<comment type="catalytic activity">
    <reaction>
        <text>[protein]-peptidylproline (omega=180) = [protein]-peptidylproline (omega=0)</text>
        <dbReference type="Rhea" id="RHEA:16237"/>
        <dbReference type="Rhea" id="RHEA-COMP:10747"/>
        <dbReference type="Rhea" id="RHEA-COMP:10748"/>
        <dbReference type="ChEBI" id="CHEBI:83833"/>
        <dbReference type="ChEBI" id="CHEBI:83834"/>
        <dbReference type="EC" id="5.2.1.8"/>
    </reaction>
</comment>
<comment type="subcellular location">
    <subcellularLocation>
        <location>Cytoplasm</location>
    </subcellularLocation>
    <text evidence="1">About half TF is bound to the ribosome near the polypeptide exit tunnel while the other half is free in the cytoplasm.</text>
</comment>
<comment type="domain">
    <text evidence="1">Consists of 3 domains; the N-terminus binds the ribosome, the middle domain has PPIase activity, while the C-terminus has intrinsic chaperone activity on its own.</text>
</comment>
<comment type="similarity">
    <text evidence="2">Belongs to the FKBP-type PPIase family. Tig subfamily.</text>
</comment>
<keyword id="KW-0131">Cell cycle</keyword>
<keyword id="KW-0132">Cell division</keyword>
<keyword id="KW-0143">Chaperone</keyword>
<keyword id="KW-0963">Cytoplasm</keyword>
<keyword id="KW-0413">Isomerase</keyword>
<keyword id="KW-1185">Reference proteome</keyword>
<keyword id="KW-0697">Rotamase</keyword>
<name>TIG_STRP1</name>
<accession>P0C0E1</accession>
<accession>O85730</accession>
<accession>Q48WP5</accession>
<proteinExistence type="inferred from homology"/>
<organism>
    <name type="scientific">Streptococcus pyogenes serotype M1</name>
    <dbReference type="NCBI Taxonomy" id="301447"/>
    <lineage>
        <taxon>Bacteria</taxon>
        <taxon>Bacillati</taxon>
        <taxon>Bacillota</taxon>
        <taxon>Bacilli</taxon>
        <taxon>Lactobacillales</taxon>
        <taxon>Streptococcaceae</taxon>
        <taxon>Streptococcus</taxon>
    </lineage>
</organism>
<evidence type="ECO:0000250" key="1"/>
<evidence type="ECO:0000305" key="2"/>
<feature type="chain" id="PRO_0000179440" description="Trigger factor">
    <location>
        <begin position="1"/>
        <end position="427"/>
    </location>
</feature>
<feature type="domain" description="PPIase FKBP-type">
    <location>
        <begin position="163"/>
        <end position="248"/>
    </location>
</feature>
<dbReference type="EC" id="5.2.1.8"/>
<dbReference type="EMBL" id="AE004092">
    <property type="protein sequence ID" value="AAK34604.2"/>
    <property type="molecule type" value="Genomic_DNA"/>
</dbReference>
<dbReference type="EMBL" id="CP000017">
    <property type="protein sequence ID" value="AAZ52230.1"/>
    <property type="molecule type" value="Genomic_DNA"/>
</dbReference>
<dbReference type="RefSeq" id="NP_269883.2">
    <property type="nucleotide sequence ID" value="NC_002737.2"/>
</dbReference>
<dbReference type="SMR" id="P0C0E1"/>
<dbReference type="PaxDb" id="1314-HKU360_01730"/>
<dbReference type="KEGG" id="spy:SPy_1896"/>
<dbReference type="KEGG" id="spz:M5005_Spy1612"/>
<dbReference type="PATRIC" id="fig|160490.10.peg.1644"/>
<dbReference type="HOGENOM" id="CLU_033058_3_2_9"/>
<dbReference type="Proteomes" id="UP000000750">
    <property type="component" value="Chromosome"/>
</dbReference>
<dbReference type="GO" id="GO:0005737">
    <property type="term" value="C:cytoplasm"/>
    <property type="evidence" value="ECO:0007669"/>
    <property type="project" value="UniProtKB-SubCell"/>
</dbReference>
<dbReference type="GO" id="GO:0003755">
    <property type="term" value="F:peptidyl-prolyl cis-trans isomerase activity"/>
    <property type="evidence" value="ECO:0007669"/>
    <property type="project" value="UniProtKB-UniRule"/>
</dbReference>
<dbReference type="GO" id="GO:0044183">
    <property type="term" value="F:protein folding chaperone"/>
    <property type="evidence" value="ECO:0007669"/>
    <property type="project" value="TreeGrafter"/>
</dbReference>
<dbReference type="GO" id="GO:0043022">
    <property type="term" value="F:ribosome binding"/>
    <property type="evidence" value="ECO:0007669"/>
    <property type="project" value="TreeGrafter"/>
</dbReference>
<dbReference type="GO" id="GO:0051083">
    <property type="term" value="P:'de novo' cotranslational protein folding"/>
    <property type="evidence" value="ECO:0007669"/>
    <property type="project" value="TreeGrafter"/>
</dbReference>
<dbReference type="GO" id="GO:0051301">
    <property type="term" value="P:cell division"/>
    <property type="evidence" value="ECO:0007669"/>
    <property type="project" value="UniProtKB-KW"/>
</dbReference>
<dbReference type="GO" id="GO:0061077">
    <property type="term" value="P:chaperone-mediated protein folding"/>
    <property type="evidence" value="ECO:0007669"/>
    <property type="project" value="TreeGrafter"/>
</dbReference>
<dbReference type="GO" id="GO:0015031">
    <property type="term" value="P:protein transport"/>
    <property type="evidence" value="ECO:0007669"/>
    <property type="project" value="UniProtKB-UniRule"/>
</dbReference>
<dbReference type="GO" id="GO:0043335">
    <property type="term" value="P:protein unfolding"/>
    <property type="evidence" value="ECO:0007669"/>
    <property type="project" value="TreeGrafter"/>
</dbReference>
<dbReference type="FunFam" id="3.10.50.40:FF:000001">
    <property type="entry name" value="Trigger factor"/>
    <property type="match status" value="1"/>
</dbReference>
<dbReference type="Gene3D" id="3.10.50.40">
    <property type="match status" value="1"/>
</dbReference>
<dbReference type="Gene3D" id="3.30.70.1050">
    <property type="entry name" value="Trigger factor ribosome-binding domain"/>
    <property type="match status" value="1"/>
</dbReference>
<dbReference type="Gene3D" id="1.10.3120.10">
    <property type="entry name" value="Trigger factor, C-terminal domain"/>
    <property type="match status" value="1"/>
</dbReference>
<dbReference type="HAMAP" id="MF_00303">
    <property type="entry name" value="Trigger_factor_Tig"/>
    <property type="match status" value="1"/>
</dbReference>
<dbReference type="InterPro" id="IPR046357">
    <property type="entry name" value="PPIase_dom_sf"/>
</dbReference>
<dbReference type="InterPro" id="IPR001179">
    <property type="entry name" value="PPIase_FKBP_dom"/>
</dbReference>
<dbReference type="InterPro" id="IPR005215">
    <property type="entry name" value="Trig_fac"/>
</dbReference>
<dbReference type="InterPro" id="IPR008880">
    <property type="entry name" value="Trigger_fac_C"/>
</dbReference>
<dbReference type="InterPro" id="IPR037041">
    <property type="entry name" value="Trigger_fac_C_sf"/>
</dbReference>
<dbReference type="InterPro" id="IPR008881">
    <property type="entry name" value="Trigger_fac_ribosome-bd_bac"/>
</dbReference>
<dbReference type="InterPro" id="IPR036611">
    <property type="entry name" value="Trigger_fac_ribosome-bd_sf"/>
</dbReference>
<dbReference type="InterPro" id="IPR027304">
    <property type="entry name" value="Trigger_fact/SurA_dom_sf"/>
</dbReference>
<dbReference type="NCBIfam" id="TIGR00115">
    <property type="entry name" value="tig"/>
    <property type="match status" value="1"/>
</dbReference>
<dbReference type="PANTHER" id="PTHR30560">
    <property type="entry name" value="TRIGGER FACTOR CHAPERONE AND PEPTIDYL-PROLYL CIS/TRANS ISOMERASE"/>
    <property type="match status" value="1"/>
</dbReference>
<dbReference type="PANTHER" id="PTHR30560:SF3">
    <property type="entry name" value="TRIGGER FACTOR-LIKE PROTEIN TIG, CHLOROPLASTIC"/>
    <property type="match status" value="1"/>
</dbReference>
<dbReference type="Pfam" id="PF00254">
    <property type="entry name" value="FKBP_C"/>
    <property type="match status" value="1"/>
</dbReference>
<dbReference type="Pfam" id="PF05698">
    <property type="entry name" value="Trigger_C"/>
    <property type="match status" value="1"/>
</dbReference>
<dbReference type="Pfam" id="PF05697">
    <property type="entry name" value="Trigger_N"/>
    <property type="match status" value="1"/>
</dbReference>
<dbReference type="PIRSF" id="PIRSF003095">
    <property type="entry name" value="Trigger_factor"/>
    <property type="match status" value="1"/>
</dbReference>
<dbReference type="SUPFAM" id="SSF54534">
    <property type="entry name" value="FKBP-like"/>
    <property type="match status" value="1"/>
</dbReference>
<dbReference type="SUPFAM" id="SSF109998">
    <property type="entry name" value="Triger factor/SurA peptide-binding domain-like"/>
    <property type="match status" value="1"/>
</dbReference>
<dbReference type="SUPFAM" id="SSF102735">
    <property type="entry name" value="Trigger factor ribosome-binding domain"/>
    <property type="match status" value="1"/>
</dbReference>
<dbReference type="PROSITE" id="PS50059">
    <property type="entry name" value="FKBP_PPIASE"/>
    <property type="match status" value="1"/>
</dbReference>
<protein>
    <recommendedName>
        <fullName>Trigger factor</fullName>
        <shortName>TF</shortName>
        <ecNumber>5.2.1.8</ecNumber>
    </recommendedName>
    <alternativeName>
        <fullName>PPIase</fullName>
    </alternativeName>
</protein>